<proteinExistence type="inferred from homology"/>
<gene>
    <name type="ORF">GE15576</name>
</gene>
<feature type="chain" id="PRO_0000390448" description="Ubiquitin-conjugating enzyme E2 S">
    <location>
        <begin position="1"/>
        <end position="209"/>
    </location>
</feature>
<feature type="domain" description="UBC core" evidence="1">
    <location>
        <begin position="14"/>
        <end position="160"/>
    </location>
</feature>
<feature type="region of interest" description="Disordered" evidence="3">
    <location>
        <begin position="164"/>
        <end position="209"/>
    </location>
</feature>
<feature type="compositionally biased region" description="Basic and acidic residues" evidence="3">
    <location>
        <begin position="171"/>
        <end position="199"/>
    </location>
</feature>
<feature type="compositionally biased region" description="Basic residues" evidence="3">
    <location>
        <begin position="200"/>
        <end position="209"/>
    </location>
</feature>
<feature type="active site" description="Glycyl thioester intermediate" evidence="1 2">
    <location>
        <position position="98"/>
    </location>
</feature>
<organism>
    <name type="scientific">Drosophila yakuba</name>
    <name type="common">Fruit fly</name>
    <dbReference type="NCBI Taxonomy" id="7245"/>
    <lineage>
        <taxon>Eukaryota</taxon>
        <taxon>Metazoa</taxon>
        <taxon>Ecdysozoa</taxon>
        <taxon>Arthropoda</taxon>
        <taxon>Hexapoda</taxon>
        <taxon>Insecta</taxon>
        <taxon>Pterygota</taxon>
        <taxon>Neoptera</taxon>
        <taxon>Endopterygota</taxon>
        <taxon>Diptera</taxon>
        <taxon>Brachycera</taxon>
        <taxon>Muscomorpha</taxon>
        <taxon>Ephydroidea</taxon>
        <taxon>Drosophilidae</taxon>
        <taxon>Drosophila</taxon>
        <taxon>Sophophora</taxon>
    </lineage>
</organism>
<accession>B4Q2J2</accession>
<sequence>MSSQYSNVENLSPQTIRQVMRELQEMETTPPEGIKVLINESDVTDIQALIDGPAGTPYAAGVFRVKLTLNKDFPQTPPKAYFLTKIFHPNVAANGEICVNTLKKDWKPDLGIKHILLTIKCLLIVPNPESALNEEAGKMLLERYDDYSQRARMMTEIHAQPAKCGVGASGDAKDDDGPSTKKHAGLDKKLQDKKKEKLLKEKKRMLKRL</sequence>
<name>UBE2S_DROYA</name>
<evidence type="ECO:0000255" key="1">
    <source>
        <dbReference type="PROSITE-ProRule" id="PRU00388"/>
    </source>
</evidence>
<evidence type="ECO:0000255" key="2">
    <source>
        <dbReference type="PROSITE-ProRule" id="PRU10133"/>
    </source>
</evidence>
<evidence type="ECO:0000256" key="3">
    <source>
        <dbReference type="SAM" id="MobiDB-lite"/>
    </source>
</evidence>
<dbReference type="EC" id="2.3.2.23"/>
<dbReference type="EMBL" id="CM000162">
    <property type="protein sequence ID" value="EDX02633.1"/>
    <property type="molecule type" value="Genomic_DNA"/>
</dbReference>
<dbReference type="SMR" id="B4Q2J2"/>
<dbReference type="EnsemblMetazoa" id="FBtr0262094">
    <property type="protein sequence ID" value="FBpp0260586"/>
    <property type="gene ID" value="FBgn0233148"/>
</dbReference>
<dbReference type="EnsemblMetazoa" id="XM_002101489.4">
    <property type="protein sequence ID" value="XP_002101525.1"/>
    <property type="gene ID" value="LOC6525703"/>
</dbReference>
<dbReference type="GeneID" id="6525703"/>
<dbReference type="KEGG" id="dya:Dyak_GE15576"/>
<dbReference type="eggNOG" id="KOG0423">
    <property type="taxonomic scope" value="Eukaryota"/>
</dbReference>
<dbReference type="HOGENOM" id="CLU_030988_5_3_1"/>
<dbReference type="OMA" id="QPAKCGA"/>
<dbReference type="OrthoDB" id="10069349at2759"/>
<dbReference type="PhylomeDB" id="B4Q2J2"/>
<dbReference type="UniPathway" id="UPA00143"/>
<dbReference type="Proteomes" id="UP000002282">
    <property type="component" value="Chromosome X"/>
</dbReference>
<dbReference type="GO" id="GO:0005524">
    <property type="term" value="F:ATP binding"/>
    <property type="evidence" value="ECO:0007669"/>
    <property type="project" value="UniProtKB-KW"/>
</dbReference>
<dbReference type="GO" id="GO:0061631">
    <property type="term" value="F:ubiquitin conjugating enzyme activity"/>
    <property type="evidence" value="ECO:0007669"/>
    <property type="project" value="UniProtKB-EC"/>
</dbReference>
<dbReference type="GO" id="GO:0031145">
    <property type="term" value="P:anaphase-promoting complex-dependent catabolic process"/>
    <property type="evidence" value="ECO:0000250"/>
    <property type="project" value="UniProtKB"/>
</dbReference>
<dbReference type="GO" id="GO:0051301">
    <property type="term" value="P:cell division"/>
    <property type="evidence" value="ECO:0007669"/>
    <property type="project" value="UniProtKB-KW"/>
</dbReference>
<dbReference type="GO" id="GO:0010458">
    <property type="term" value="P:exit from mitosis"/>
    <property type="evidence" value="ECO:0000250"/>
    <property type="project" value="UniProtKB"/>
</dbReference>
<dbReference type="GO" id="GO:0016567">
    <property type="term" value="P:protein ubiquitination"/>
    <property type="evidence" value="ECO:0007669"/>
    <property type="project" value="UniProtKB-UniPathway"/>
</dbReference>
<dbReference type="CDD" id="cd23804">
    <property type="entry name" value="UBCc_UBE2S"/>
    <property type="match status" value="1"/>
</dbReference>
<dbReference type="FunFam" id="3.10.110.10:FF:000034">
    <property type="entry name" value="Ubiquitin-conjugating enzyme E2 S"/>
    <property type="match status" value="1"/>
</dbReference>
<dbReference type="Gene3D" id="3.10.110.10">
    <property type="entry name" value="Ubiquitin Conjugating Enzyme"/>
    <property type="match status" value="1"/>
</dbReference>
<dbReference type="InterPro" id="IPR050113">
    <property type="entry name" value="Ub_conjugating_enzyme"/>
</dbReference>
<dbReference type="InterPro" id="IPR000608">
    <property type="entry name" value="UBQ-conjugat_E2_core"/>
</dbReference>
<dbReference type="InterPro" id="IPR023313">
    <property type="entry name" value="UBQ-conjugating_AS"/>
</dbReference>
<dbReference type="InterPro" id="IPR016135">
    <property type="entry name" value="UBQ-conjugating_enzyme/RWD"/>
</dbReference>
<dbReference type="PANTHER" id="PTHR24067">
    <property type="entry name" value="UBIQUITIN-CONJUGATING ENZYME E2"/>
    <property type="match status" value="1"/>
</dbReference>
<dbReference type="Pfam" id="PF00179">
    <property type="entry name" value="UQ_con"/>
    <property type="match status" value="1"/>
</dbReference>
<dbReference type="SMART" id="SM00212">
    <property type="entry name" value="UBCc"/>
    <property type="match status" value="1"/>
</dbReference>
<dbReference type="SUPFAM" id="SSF54495">
    <property type="entry name" value="UBC-like"/>
    <property type="match status" value="1"/>
</dbReference>
<dbReference type="PROSITE" id="PS00183">
    <property type="entry name" value="UBC_1"/>
    <property type="match status" value="1"/>
</dbReference>
<dbReference type="PROSITE" id="PS50127">
    <property type="entry name" value="UBC_2"/>
    <property type="match status" value="1"/>
</dbReference>
<comment type="function">
    <text evidence="1">Catalyzes the covalent attachment of ubiquitin to other proteins. Acts as an essential factor of the anaphase promoting complex/cyclosome (APC/C), a cell cycle-regulated ubiquitin ligase that controls progression through mitosis. Acts by specifically elongating polyubiquitin chains initiated by the E2 enzyme vih/UbcH10 on APC/C substrates, enhancing the degradation of APC/C substrates by the proteasome and promoting mitotic exit.</text>
</comment>
<comment type="catalytic activity">
    <reaction evidence="1 2">
        <text>S-ubiquitinyl-[E1 ubiquitin-activating enzyme]-L-cysteine + [E2 ubiquitin-conjugating enzyme]-L-cysteine = [E1 ubiquitin-activating enzyme]-L-cysteine + S-ubiquitinyl-[E2 ubiquitin-conjugating enzyme]-L-cysteine.</text>
        <dbReference type="EC" id="2.3.2.23"/>
    </reaction>
</comment>
<comment type="pathway">
    <text evidence="1">Protein modification; protein ubiquitination.</text>
</comment>
<comment type="similarity">
    <text evidence="1">Belongs to the ubiquitin-conjugating enzyme family.</text>
</comment>
<reference key="1">
    <citation type="journal article" date="2007" name="Nature">
        <title>Evolution of genes and genomes on the Drosophila phylogeny.</title>
        <authorList>
            <consortium name="Drosophila 12 genomes consortium"/>
        </authorList>
    </citation>
    <scope>NUCLEOTIDE SEQUENCE [LARGE SCALE GENOMIC DNA]</scope>
    <source>
        <strain>Tai18E2 / Tucson 14021-0261.01</strain>
    </source>
</reference>
<protein>
    <recommendedName>
        <fullName>Ubiquitin-conjugating enzyme E2 S</fullName>
        <ecNumber>2.3.2.23</ecNumber>
    </recommendedName>
    <alternativeName>
        <fullName>E2 ubiquitin-conjugating enzyme S</fullName>
    </alternativeName>
    <alternativeName>
        <fullName>Ubiquitin carrier protein S</fullName>
    </alternativeName>
    <alternativeName>
        <fullName>Ubiquitin-protein ligase S</fullName>
    </alternativeName>
</protein>
<keyword id="KW-0067">ATP-binding</keyword>
<keyword id="KW-0131">Cell cycle</keyword>
<keyword id="KW-0132">Cell division</keyword>
<keyword id="KW-0547">Nucleotide-binding</keyword>
<keyword id="KW-0808">Transferase</keyword>
<keyword id="KW-0833">Ubl conjugation pathway</keyword>